<comment type="catalytic activity">
    <reaction>
        <text>N-(5-phospho-beta-D-ribosyl)anthranilate = 1-(2-carboxyphenylamino)-1-deoxy-D-ribulose 5-phosphate</text>
        <dbReference type="Rhea" id="RHEA:21540"/>
        <dbReference type="ChEBI" id="CHEBI:18277"/>
        <dbReference type="ChEBI" id="CHEBI:58613"/>
        <dbReference type="EC" id="5.3.1.24"/>
    </reaction>
</comment>
<comment type="pathway">
    <text>Amino-acid biosynthesis; L-tryptophan biosynthesis; L-tryptophan from chorismate: step 3/5.</text>
</comment>
<comment type="similarity">
    <text evidence="1">Belongs to the TrpF family.</text>
</comment>
<dbReference type="EC" id="5.3.1.24"/>
<dbReference type="EMBL" id="D83654">
    <property type="protein sequence ID" value="BAA12028.1"/>
    <property type="molecule type" value="Genomic_DNA"/>
</dbReference>
<dbReference type="EMBL" id="AE004091">
    <property type="protein sequence ID" value="AAG06501.1"/>
    <property type="molecule type" value="Genomic_DNA"/>
</dbReference>
<dbReference type="PIR" id="D83257">
    <property type="entry name" value="D83257"/>
</dbReference>
<dbReference type="RefSeq" id="NP_251803.1">
    <property type="nucleotide sequence ID" value="NC_002516.2"/>
</dbReference>
<dbReference type="RefSeq" id="WP_003104200.1">
    <property type="nucleotide sequence ID" value="NZ_QZGE01000023.1"/>
</dbReference>
<dbReference type="SMR" id="Q59649"/>
<dbReference type="STRING" id="208964.PA3113"/>
<dbReference type="PaxDb" id="208964-PA3113"/>
<dbReference type="GeneID" id="877681"/>
<dbReference type="KEGG" id="pae:PA3113"/>
<dbReference type="PATRIC" id="fig|208964.12.peg.3265"/>
<dbReference type="PseudoCAP" id="PA3113"/>
<dbReference type="HOGENOM" id="CLU_076364_2_0_6"/>
<dbReference type="InParanoid" id="Q59649"/>
<dbReference type="OrthoDB" id="9796196at2"/>
<dbReference type="PhylomeDB" id="Q59649"/>
<dbReference type="BioCyc" id="PAER208964:G1FZ6-3169-MONOMER"/>
<dbReference type="UniPathway" id="UPA00035">
    <property type="reaction ID" value="UER00042"/>
</dbReference>
<dbReference type="Proteomes" id="UP000002438">
    <property type="component" value="Chromosome"/>
</dbReference>
<dbReference type="GO" id="GO:0004640">
    <property type="term" value="F:phosphoribosylanthranilate isomerase activity"/>
    <property type="evidence" value="ECO:0000318"/>
    <property type="project" value="GO_Central"/>
</dbReference>
<dbReference type="GO" id="GO:0000162">
    <property type="term" value="P:L-tryptophan biosynthetic process"/>
    <property type="evidence" value="ECO:0000318"/>
    <property type="project" value="GO_Central"/>
</dbReference>
<dbReference type="CDD" id="cd00405">
    <property type="entry name" value="PRAI"/>
    <property type="match status" value="1"/>
</dbReference>
<dbReference type="FunFam" id="3.20.20.70:FF:000075">
    <property type="entry name" value="Tryptophan biosynthesis protein TRP1"/>
    <property type="match status" value="1"/>
</dbReference>
<dbReference type="Gene3D" id="3.20.20.70">
    <property type="entry name" value="Aldolase class I"/>
    <property type="match status" value="1"/>
</dbReference>
<dbReference type="HAMAP" id="MF_00135">
    <property type="entry name" value="PRAI"/>
    <property type="match status" value="1"/>
</dbReference>
<dbReference type="InterPro" id="IPR013785">
    <property type="entry name" value="Aldolase_TIM"/>
</dbReference>
<dbReference type="InterPro" id="IPR001240">
    <property type="entry name" value="PRAI_dom"/>
</dbReference>
<dbReference type="InterPro" id="IPR011060">
    <property type="entry name" value="RibuloseP-bd_barrel"/>
</dbReference>
<dbReference type="InterPro" id="IPR044643">
    <property type="entry name" value="TrpF_fam"/>
</dbReference>
<dbReference type="NCBIfam" id="NF002298">
    <property type="entry name" value="PRK01222.1-4"/>
    <property type="match status" value="1"/>
</dbReference>
<dbReference type="NCBIfam" id="NF002299">
    <property type="entry name" value="PRK01222.1-6"/>
    <property type="match status" value="1"/>
</dbReference>
<dbReference type="PANTHER" id="PTHR42894">
    <property type="entry name" value="N-(5'-PHOSPHORIBOSYL)ANTHRANILATE ISOMERASE"/>
    <property type="match status" value="1"/>
</dbReference>
<dbReference type="PANTHER" id="PTHR42894:SF1">
    <property type="entry name" value="N-(5'-PHOSPHORIBOSYL)ANTHRANILATE ISOMERASE"/>
    <property type="match status" value="1"/>
</dbReference>
<dbReference type="Pfam" id="PF00697">
    <property type="entry name" value="PRAI"/>
    <property type="match status" value="1"/>
</dbReference>
<dbReference type="SUPFAM" id="SSF51366">
    <property type="entry name" value="Ribulose-phoshate binding barrel"/>
    <property type="match status" value="1"/>
</dbReference>
<accession>Q59649</accession>
<sequence length="211" mass="22299">MPAVRIKICGITRVEDALAAAAAGADAIGLVFYAKSPRAVDIHRAREIVRALPPFVTSVGLFVNASRCELGEILDAVPLDLLQFHGDERAEDCEGHRRPYLKALRMKPGDDIVGRAAAYPGAAGILLDTYVEGVPGGTGAAFDWSLVPTDLGKPLVLAGGLTPDNVGRAVEQVKPYAVDVSGGVEASKGIKDAARVRAFVDAVRSRRRDET</sequence>
<gene>
    <name type="primary">trpF</name>
    <name type="ordered locus">PA3113</name>
</gene>
<name>TRPF_PSEAE</name>
<proteinExistence type="inferred from homology"/>
<evidence type="ECO:0000305" key="1"/>
<organism>
    <name type="scientific">Pseudomonas aeruginosa (strain ATCC 15692 / DSM 22644 / CIP 104116 / JCM 14847 / LMG 12228 / 1C / PRS 101 / PAO1)</name>
    <dbReference type="NCBI Taxonomy" id="208964"/>
    <lineage>
        <taxon>Bacteria</taxon>
        <taxon>Pseudomonadati</taxon>
        <taxon>Pseudomonadota</taxon>
        <taxon>Gammaproteobacteria</taxon>
        <taxon>Pseudomonadales</taxon>
        <taxon>Pseudomonadaceae</taxon>
        <taxon>Pseudomonas</taxon>
    </lineage>
</organism>
<reference key="1">
    <citation type="journal article" date="1996" name="Microbiol. Immunol.">
        <title>The trpF nucleotide sequence and its promoter analysis in Pseudomonas aeruginosa.</title>
        <authorList>
            <person name="Murata T."/>
        </authorList>
    </citation>
    <scope>NUCLEOTIDE SEQUENCE [GENOMIC DNA]</scope>
    <source>
        <strain>ATCC 15692 / DSM 22644 / CIP 104116 / JCM 14847 / LMG 12228 / 1C / PRS 101 / PAO1</strain>
    </source>
</reference>
<reference key="2">
    <citation type="journal article" date="2000" name="Nature">
        <title>Complete genome sequence of Pseudomonas aeruginosa PAO1, an opportunistic pathogen.</title>
        <authorList>
            <person name="Stover C.K."/>
            <person name="Pham X.-Q.T."/>
            <person name="Erwin A.L."/>
            <person name="Mizoguchi S.D."/>
            <person name="Warrener P."/>
            <person name="Hickey M.J."/>
            <person name="Brinkman F.S.L."/>
            <person name="Hufnagle W.O."/>
            <person name="Kowalik D.J."/>
            <person name="Lagrou M."/>
            <person name="Garber R.L."/>
            <person name="Goltry L."/>
            <person name="Tolentino E."/>
            <person name="Westbrock-Wadman S."/>
            <person name="Yuan Y."/>
            <person name="Brody L.L."/>
            <person name="Coulter S.N."/>
            <person name="Folger K.R."/>
            <person name="Kas A."/>
            <person name="Larbig K."/>
            <person name="Lim R.M."/>
            <person name="Smith K.A."/>
            <person name="Spencer D.H."/>
            <person name="Wong G.K.-S."/>
            <person name="Wu Z."/>
            <person name="Paulsen I.T."/>
            <person name="Reizer J."/>
            <person name="Saier M.H. Jr."/>
            <person name="Hancock R.E.W."/>
            <person name="Lory S."/>
            <person name="Olson M.V."/>
        </authorList>
    </citation>
    <scope>NUCLEOTIDE SEQUENCE [LARGE SCALE GENOMIC DNA]</scope>
    <source>
        <strain>ATCC 15692 / DSM 22644 / CIP 104116 / JCM 14847 / LMG 12228 / 1C / PRS 101 / PAO1</strain>
    </source>
</reference>
<protein>
    <recommendedName>
        <fullName>N-(5'-phosphoribosyl)anthranilate isomerase</fullName>
        <shortName>PRAI</shortName>
        <ecNumber>5.3.1.24</ecNumber>
    </recommendedName>
</protein>
<keyword id="KW-0028">Amino-acid biosynthesis</keyword>
<keyword id="KW-0057">Aromatic amino acid biosynthesis</keyword>
<keyword id="KW-0413">Isomerase</keyword>
<keyword id="KW-1185">Reference proteome</keyword>
<keyword id="KW-0822">Tryptophan biosynthesis</keyword>
<feature type="chain" id="PRO_0000154369" description="N-(5'-phosphoribosyl)anthranilate isomerase">
    <location>
        <begin position="1"/>
        <end position="211"/>
    </location>
</feature>